<dbReference type="EC" id="3.7.1.14" evidence="2"/>
<dbReference type="EMBL" id="CU928160">
    <property type="protein sequence ID" value="CAQ97224.1"/>
    <property type="status" value="ALT_INIT"/>
    <property type="molecule type" value="Genomic_DNA"/>
</dbReference>
<dbReference type="RefSeq" id="WP_000121898.1">
    <property type="nucleotide sequence ID" value="NC_011741.1"/>
</dbReference>
<dbReference type="SMR" id="B7M2Z7"/>
<dbReference type="ESTHER" id="ecoli-mhpc">
    <property type="family name" value="Carbon-carbon_bond_hydrolase"/>
</dbReference>
<dbReference type="MEROPS" id="S33.995"/>
<dbReference type="GeneID" id="93777106"/>
<dbReference type="KEGG" id="ecr:ECIAI1_0350"/>
<dbReference type="HOGENOM" id="CLU_020336_13_2_6"/>
<dbReference type="UniPathway" id="UPA00714"/>
<dbReference type="GO" id="GO:0005737">
    <property type="term" value="C:cytoplasm"/>
    <property type="evidence" value="ECO:0007669"/>
    <property type="project" value="InterPro"/>
</dbReference>
<dbReference type="GO" id="GO:0052823">
    <property type="term" value="F:2-hydroxy-6-oxonona-2,4,7-trienedioate hydrolase activity"/>
    <property type="evidence" value="ECO:0007669"/>
    <property type="project" value="RHEA"/>
</dbReference>
<dbReference type="GO" id="GO:0018771">
    <property type="term" value="F:2-hydroxy-6-oxonona-2,4-dienedioate hydrolase activity"/>
    <property type="evidence" value="ECO:0007669"/>
    <property type="project" value="UniProtKB-UniRule"/>
</dbReference>
<dbReference type="GO" id="GO:0042803">
    <property type="term" value="F:protein homodimerization activity"/>
    <property type="evidence" value="ECO:0007669"/>
    <property type="project" value="InterPro"/>
</dbReference>
<dbReference type="GO" id="GO:0019380">
    <property type="term" value="P:3-phenylpropionate catabolic process"/>
    <property type="evidence" value="ECO:0007669"/>
    <property type="project" value="UniProtKB-UniRule"/>
</dbReference>
<dbReference type="FunFam" id="3.40.50.1820:FF:000085">
    <property type="entry name" value="2-hydroxy-6-oxononadienedioate/2-hydroxy-6-oxononatrienedioate hydrolase"/>
    <property type="match status" value="1"/>
</dbReference>
<dbReference type="Gene3D" id="3.40.50.1820">
    <property type="entry name" value="alpha/beta hydrolase"/>
    <property type="match status" value="1"/>
</dbReference>
<dbReference type="HAMAP" id="MF_01654">
    <property type="entry name" value="MhpC"/>
    <property type="match status" value="1"/>
</dbReference>
<dbReference type="InterPro" id="IPR000073">
    <property type="entry name" value="AB_hydrolase_1"/>
</dbReference>
<dbReference type="InterPro" id="IPR029058">
    <property type="entry name" value="AB_hydrolase_fold"/>
</dbReference>
<dbReference type="InterPro" id="IPR000639">
    <property type="entry name" value="Epox_hydrolase-like"/>
</dbReference>
<dbReference type="InterPro" id="IPR023791">
    <property type="entry name" value="MhpC_alpha/beta_hydrolase"/>
</dbReference>
<dbReference type="PANTHER" id="PTHR43689:SF8">
    <property type="entry name" value="ALPHA_BETA-HYDROLASES SUPERFAMILY PROTEIN"/>
    <property type="match status" value="1"/>
</dbReference>
<dbReference type="PANTHER" id="PTHR43689">
    <property type="entry name" value="HYDROLASE"/>
    <property type="match status" value="1"/>
</dbReference>
<dbReference type="Pfam" id="PF00561">
    <property type="entry name" value="Abhydrolase_1"/>
    <property type="match status" value="1"/>
</dbReference>
<dbReference type="PRINTS" id="PR00111">
    <property type="entry name" value="ABHYDROLASE"/>
</dbReference>
<dbReference type="PRINTS" id="PR00412">
    <property type="entry name" value="EPOXHYDRLASE"/>
</dbReference>
<dbReference type="SUPFAM" id="SSF53474">
    <property type="entry name" value="alpha/beta-Hydrolases"/>
    <property type="match status" value="1"/>
</dbReference>
<sequence length="288" mass="31937">MSYQPQTEAATSRFLNVEEAGKTLRIHFNDCGQGDETVVLLHGSGPGATGWANFSRNIDPLVEAGYRVILLDCPGWGKSDSIVNSGSRSDLNARILKSVVDQLDIAKIHLLGNSMGGHSSVAFTLNWPERVGKLVLMGGGTGGMSLFTPMPTEGIKRLNQLYRQPTIENLKLMMDIFVFDTSDLTDALFEARLNNMLSRRDHLENFVKSLEANPKQFPDFGPRLAEIKAQTLIVWGRNDRFVPMDAGLRLLSGIAGSELHIFRDCGHWAQWEHADAFNQLVLNFLARP</sequence>
<gene>
    <name evidence="2" type="primary">mhpC</name>
    <name type="ordered locus">ECIAI1_0350</name>
</gene>
<protein>
    <recommendedName>
        <fullName evidence="2">2-hydroxy-6-oxononadienedioate/2-hydroxy-6-oxononatrienedioate hydrolase</fullName>
        <ecNumber evidence="2">3.7.1.14</ecNumber>
    </recommendedName>
    <alternativeName>
        <fullName evidence="2">2-hydroxy-6-ketonona-2,4-diene-1,9-dioic acid 5,6-hydrolase</fullName>
    </alternativeName>
    <alternativeName>
        <fullName evidence="2">2-hydroxy-6-oxonona-2,4,7-triene-1,9-dioic acid 5,6-hydrolase</fullName>
    </alternativeName>
    <alternativeName>
        <fullName evidence="2">2-hydroxy-6-oxonona-2,4-diene-1,9-dioic acid 5,6-hydrolase</fullName>
    </alternativeName>
</protein>
<name>MHPC_ECO8A</name>
<comment type="function">
    <text evidence="2">Catalyzes the cleavage of the C5-C6 bond of 2-hydroxy-6-oxononadienedioate and 2-hydroxy-6-oxononatrienedioate, a dienol ring fission product of the bacterial meta-cleavage pathway for degradation of phenylpropionic acid.</text>
</comment>
<comment type="catalytic activity">
    <reaction evidence="2">
        <text>(2Z,4E)-2-hydroxy-6-oxonona-2,4-dienedioate + H2O = (2Z)-2-hydroxypenta-2,4-dienoate + succinate + H(+)</text>
        <dbReference type="Rhea" id="RHEA:34187"/>
        <dbReference type="ChEBI" id="CHEBI:15377"/>
        <dbReference type="ChEBI" id="CHEBI:15378"/>
        <dbReference type="ChEBI" id="CHEBI:30031"/>
        <dbReference type="ChEBI" id="CHEBI:66887"/>
        <dbReference type="ChEBI" id="CHEBI:67152"/>
        <dbReference type="EC" id="3.7.1.14"/>
    </reaction>
</comment>
<comment type="catalytic activity">
    <reaction evidence="2">
        <text>(2Z,4E,7E)-2-hydroxy-6-oxonona-2,4,7-trienedioate + H2O = (2Z)-2-hydroxypenta-2,4-dienoate + fumarate + H(+)</text>
        <dbReference type="Rhea" id="RHEA:34191"/>
        <dbReference type="ChEBI" id="CHEBI:15377"/>
        <dbReference type="ChEBI" id="CHEBI:15378"/>
        <dbReference type="ChEBI" id="CHEBI:29806"/>
        <dbReference type="ChEBI" id="CHEBI:66888"/>
        <dbReference type="ChEBI" id="CHEBI:67152"/>
        <dbReference type="EC" id="3.7.1.14"/>
    </reaction>
</comment>
<comment type="pathway">
    <text evidence="2">Aromatic compound metabolism; 3-phenylpropanoate degradation.</text>
</comment>
<comment type="subunit">
    <text evidence="2">Homodimer.</text>
</comment>
<comment type="similarity">
    <text evidence="2">Belongs to the AB hydrolase superfamily. MhpC family.</text>
</comment>
<comment type="sequence caution" evidence="3">
    <conflict type="erroneous initiation">
        <sequence resource="EMBL-CDS" id="CAQ97224"/>
    </conflict>
    <text>Extended N-terminus.</text>
</comment>
<proteinExistence type="inferred from homology"/>
<organism>
    <name type="scientific">Escherichia coli O8 (strain IAI1)</name>
    <dbReference type="NCBI Taxonomy" id="585034"/>
    <lineage>
        <taxon>Bacteria</taxon>
        <taxon>Pseudomonadati</taxon>
        <taxon>Pseudomonadota</taxon>
        <taxon>Gammaproteobacteria</taxon>
        <taxon>Enterobacterales</taxon>
        <taxon>Enterobacteriaceae</taxon>
        <taxon>Escherichia</taxon>
    </lineage>
</organism>
<evidence type="ECO:0000255" key="1"/>
<evidence type="ECO:0000255" key="2">
    <source>
        <dbReference type="HAMAP-Rule" id="MF_01654"/>
    </source>
</evidence>
<evidence type="ECO:0000305" key="3"/>
<feature type="chain" id="PRO_1000187015" description="2-hydroxy-6-oxononadienedioate/2-hydroxy-6-oxononatrienedioate hydrolase">
    <location>
        <begin position="1"/>
        <end position="288"/>
    </location>
</feature>
<feature type="domain" description="AB hydrolase-1" evidence="1">
    <location>
        <begin position="38"/>
        <end position="273"/>
    </location>
</feature>
<feature type="active site" description="Proton acceptor" evidence="2">
    <location>
        <position position="267"/>
    </location>
</feature>
<feature type="site" description="Transition state stabilizer" evidence="2">
    <location>
        <position position="114"/>
    </location>
</feature>
<feature type="site" description="Catalytic role in ketonization of the dienol substrate (substrate destabilization)" evidence="2">
    <location>
        <position position="192"/>
    </location>
</feature>
<keyword id="KW-0058">Aromatic hydrocarbons catabolism</keyword>
<keyword id="KW-0378">Hydrolase</keyword>
<accession>B7M2Z7</accession>
<reference key="1">
    <citation type="journal article" date="2009" name="PLoS Genet.">
        <title>Organised genome dynamics in the Escherichia coli species results in highly diverse adaptive paths.</title>
        <authorList>
            <person name="Touchon M."/>
            <person name="Hoede C."/>
            <person name="Tenaillon O."/>
            <person name="Barbe V."/>
            <person name="Baeriswyl S."/>
            <person name="Bidet P."/>
            <person name="Bingen E."/>
            <person name="Bonacorsi S."/>
            <person name="Bouchier C."/>
            <person name="Bouvet O."/>
            <person name="Calteau A."/>
            <person name="Chiapello H."/>
            <person name="Clermont O."/>
            <person name="Cruveiller S."/>
            <person name="Danchin A."/>
            <person name="Diard M."/>
            <person name="Dossat C."/>
            <person name="Karoui M.E."/>
            <person name="Frapy E."/>
            <person name="Garry L."/>
            <person name="Ghigo J.M."/>
            <person name="Gilles A.M."/>
            <person name="Johnson J."/>
            <person name="Le Bouguenec C."/>
            <person name="Lescat M."/>
            <person name="Mangenot S."/>
            <person name="Martinez-Jehanne V."/>
            <person name="Matic I."/>
            <person name="Nassif X."/>
            <person name="Oztas S."/>
            <person name="Petit M.A."/>
            <person name="Pichon C."/>
            <person name="Rouy Z."/>
            <person name="Ruf C.S."/>
            <person name="Schneider D."/>
            <person name="Tourret J."/>
            <person name="Vacherie B."/>
            <person name="Vallenet D."/>
            <person name="Medigue C."/>
            <person name="Rocha E.P.C."/>
            <person name="Denamur E."/>
        </authorList>
    </citation>
    <scope>NUCLEOTIDE SEQUENCE [LARGE SCALE GENOMIC DNA]</scope>
    <source>
        <strain>IAI1</strain>
    </source>
</reference>